<comment type="function">
    <text evidence="1">Converts 2C-methyl-D-erythritol 2,4-cyclodiphosphate (ME-2,4cPP) into 1-hydroxy-2-methyl-2-(E)-butenyl 4-diphosphate.</text>
</comment>
<comment type="catalytic activity">
    <reaction evidence="1">
        <text>(2E)-4-hydroxy-3-methylbut-2-enyl diphosphate + oxidized [flavodoxin] + H2O + 2 H(+) = 2-C-methyl-D-erythritol 2,4-cyclic diphosphate + reduced [flavodoxin]</text>
        <dbReference type="Rhea" id="RHEA:43604"/>
        <dbReference type="Rhea" id="RHEA-COMP:10622"/>
        <dbReference type="Rhea" id="RHEA-COMP:10623"/>
        <dbReference type="ChEBI" id="CHEBI:15377"/>
        <dbReference type="ChEBI" id="CHEBI:15378"/>
        <dbReference type="ChEBI" id="CHEBI:57618"/>
        <dbReference type="ChEBI" id="CHEBI:58210"/>
        <dbReference type="ChEBI" id="CHEBI:58483"/>
        <dbReference type="ChEBI" id="CHEBI:128753"/>
        <dbReference type="EC" id="1.17.7.3"/>
    </reaction>
</comment>
<comment type="cofactor">
    <cofactor evidence="1">
        <name>[4Fe-4S] cluster</name>
        <dbReference type="ChEBI" id="CHEBI:49883"/>
    </cofactor>
    <text evidence="1">Binds 1 [4Fe-4S] cluster.</text>
</comment>
<comment type="pathway">
    <text evidence="1">Isoprenoid biosynthesis; isopentenyl diphosphate biosynthesis via DXP pathway; isopentenyl diphosphate from 1-deoxy-D-xylulose 5-phosphate: step 5/6.</text>
</comment>
<comment type="similarity">
    <text evidence="1">Belongs to the IspG family.</text>
</comment>
<dbReference type="EC" id="1.17.7.3" evidence="1"/>
<dbReference type="EMBL" id="CP000851">
    <property type="protein sequence ID" value="ABV86632.1"/>
    <property type="molecule type" value="Genomic_DNA"/>
</dbReference>
<dbReference type="RefSeq" id="WP_012154558.1">
    <property type="nucleotide sequence ID" value="NC_009901.1"/>
</dbReference>
<dbReference type="SMR" id="A8H245"/>
<dbReference type="STRING" id="398579.Spea_1305"/>
<dbReference type="KEGG" id="spl:Spea_1305"/>
<dbReference type="eggNOG" id="COG0821">
    <property type="taxonomic scope" value="Bacteria"/>
</dbReference>
<dbReference type="HOGENOM" id="CLU_042258_0_0_6"/>
<dbReference type="OrthoDB" id="9803214at2"/>
<dbReference type="UniPathway" id="UPA00056">
    <property type="reaction ID" value="UER00096"/>
</dbReference>
<dbReference type="Proteomes" id="UP000002608">
    <property type="component" value="Chromosome"/>
</dbReference>
<dbReference type="GO" id="GO:0051539">
    <property type="term" value="F:4 iron, 4 sulfur cluster binding"/>
    <property type="evidence" value="ECO:0007669"/>
    <property type="project" value="UniProtKB-UniRule"/>
</dbReference>
<dbReference type="GO" id="GO:0046429">
    <property type="term" value="F:4-hydroxy-3-methylbut-2-en-1-yl diphosphate synthase activity (ferredoxin)"/>
    <property type="evidence" value="ECO:0007669"/>
    <property type="project" value="UniProtKB-UniRule"/>
</dbReference>
<dbReference type="GO" id="GO:0141197">
    <property type="term" value="F:4-hydroxy-3-methylbut-2-enyl-diphosphate synthase activity (flavodoxin)"/>
    <property type="evidence" value="ECO:0007669"/>
    <property type="project" value="UniProtKB-EC"/>
</dbReference>
<dbReference type="GO" id="GO:0005506">
    <property type="term" value="F:iron ion binding"/>
    <property type="evidence" value="ECO:0007669"/>
    <property type="project" value="InterPro"/>
</dbReference>
<dbReference type="GO" id="GO:0019288">
    <property type="term" value="P:isopentenyl diphosphate biosynthetic process, methylerythritol 4-phosphate pathway"/>
    <property type="evidence" value="ECO:0007669"/>
    <property type="project" value="UniProtKB-UniRule"/>
</dbReference>
<dbReference type="GO" id="GO:0016114">
    <property type="term" value="P:terpenoid biosynthetic process"/>
    <property type="evidence" value="ECO:0007669"/>
    <property type="project" value="InterPro"/>
</dbReference>
<dbReference type="FunFam" id="3.20.20.20:FF:000001">
    <property type="entry name" value="4-hydroxy-3-methylbut-2-en-1-yl diphosphate synthase (flavodoxin)"/>
    <property type="match status" value="1"/>
</dbReference>
<dbReference type="FunFam" id="3.30.413.10:FF:000002">
    <property type="entry name" value="4-hydroxy-3-methylbut-2-en-1-yl diphosphate synthase (flavodoxin)"/>
    <property type="match status" value="1"/>
</dbReference>
<dbReference type="Gene3D" id="3.20.20.20">
    <property type="entry name" value="Dihydropteroate synthase-like"/>
    <property type="match status" value="1"/>
</dbReference>
<dbReference type="Gene3D" id="3.30.413.10">
    <property type="entry name" value="Sulfite Reductase Hemoprotein, domain 1"/>
    <property type="match status" value="1"/>
</dbReference>
<dbReference type="HAMAP" id="MF_00159">
    <property type="entry name" value="IspG"/>
    <property type="match status" value="1"/>
</dbReference>
<dbReference type="InterPro" id="IPR011005">
    <property type="entry name" value="Dihydropteroate_synth-like_sf"/>
</dbReference>
<dbReference type="InterPro" id="IPR036849">
    <property type="entry name" value="Enolase-like_C_sf"/>
</dbReference>
<dbReference type="InterPro" id="IPR016425">
    <property type="entry name" value="IspG_bac"/>
</dbReference>
<dbReference type="InterPro" id="IPR004588">
    <property type="entry name" value="IspG_bac-typ"/>
</dbReference>
<dbReference type="InterPro" id="IPR045854">
    <property type="entry name" value="NO2/SO3_Rdtase_4Fe4S_sf"/>
</dbReference>
<dbReference type="NCBIfam" id="TIGR00612">
    <property type="entry name" value="ispG_gcpE"/>
    <property type="match status" value="1"/>
</dbReference>
<dbReference type="NCBIfam" id="NF001540">
    <property type="entry name" value="PRK00366.1"/>
    <property type="match status" value="1"/>
</dbReference>
<dbReference type="PANTHER" id="PTHR30454">
    <property type="entry name" value="4-HYDROXY-3-METHYLBUT-2-EN-1-YL DIPHOSPHATE SYNTHASE"/>
    <property type="match status" value="1"/>
</dbReference>
<dbReference type="PANTHER" id="PTHR30454:SF0">
    <property type="entry name" value="4-HYDROXY-3-METHYLBUT-2-EN-1-YL DIPHOSPHATE SYNTHASE (FERREDOXIN), CHLOROPLASTIC"/>
    <property type="match status" value="1"/>
</dbReference>
<dbReference type="Pfam" id="PF04551">
    <property type="entry name" value="GcpE"/>
    <property type="match status" value="1"/>
</dbReference>
<dbReference type="PIRSF" id="PIRSF004640">
    <property type="entry name" value="IspG"/>
    <property type="match status" value="1"/>
</dbReference>
<dbReference type="SUPFAM" id="SSF51604">
    <property type="entry name" value="Enolase C-terminal domain-like"/>
    <property type="match status" value="1"/>
</dbReference>
<dbReference type="SUPFAM" id="SSF56014">
    <property type="entry name" value="Nitrite and sulphite reductase 4Fe-4S domain-like"/>
    <property type="match status" value="1"/>
</dbReference>
<keyword id="KW-0004">4Fe-4S</keyword>
<keyword id="KW-0408">Iron</keyword>
<keyword id="KW-0411">Iron-sulfur</keyword>
<keyword id="KW-0414">Isoprene biosynthesis</keyword>
<keyword id="KW-0479">Metal-binding</keyword>
<keyword id="KW-0560">Oxidoreductase</keyword>
<keyword id="KW-1185">Reference proteome</keyword>
<name>ISPG_SHEPA</name>
<sequence length="371" mass="40351">MYNESPIIRRKSSRIYVGNVPIGDGAPIAVQSMTNTRTTDVEATVAQIKALENVGADIVRVSVPTMDAAEAFKLIKQQTSIPLIADIHFDYRIALKVAEYGVDCLRINPGNIGNEERIRSVVECARDMNIPIRIGVNGGSLEKDLMDKYKEPTPEALLESAMRHVDILDRLNFDQFKVSVKASDVFLAVESYRLLAKQIVQPLHLGITEAGGARAGSVKSAVGLGMLLADGIGDTLRISLAADPVEEIKVGFDILKSLRIRSRGINFIACPSCSRQEFDVISTVNELEQRLEDIVTPMDVSIIGCVVNGPGEALVSDIGLTGGNRMSGYYDDGVRQKERFDNTNIVDSLEAKIRAKAAIVAGRIPAQDLNK</sequence>
<gene>
    <name evidence="1" type="primary">ispG</name>
    <name type="ordered locus">Spea_1305</name>
</gene>
<protein>
    <recommendedName>
        <fullName evidence="1">4-hydroxy-3-methylbut-2-en-1-yl diphosphate synthase (flavodoxin)</fullName>
        <ecNumber evidence="1">1.17.7.3</ecNumber>
    </recommendedName>
    <alternativeName>
        <fullName evidence="1">1-hydroxy-2-methyl-2-(E)-butenyl 4-diphosphate synthase</fullName>
    </alternativeName>
</protein>
<reference key="1">
    <citation type="submission" date="2007-10" db="EMBL/GenBank/DDBJ databases">
        <title>Complete sequence of Shewanella pealeana ATCC 700345.</title>
        <authorList>
            <consortium name="US DOE Joint Genome Institute"/>
            <person name="Copeland A."/>
            <person name="Lucas S."/>
            <person name="Lapidus A."/>
            <person name="Barry K."/>
            <person name="Glavina del Rio T."/>
            <person name="Dalin E."/>
            <person name="Tice H."/>
            <person name="Pitluck S."/>
            <person name="Chertkov O."/>
            <person name="Brettin T."/>
            <person name="Bruce D."/>
            <person name="Detter J.C."/>
            <person name="Han C."/>
            <person name="Schmutz J."/>
            <person name="Larimer F."/>
            <person name="Land M."/>
            <person name="Hauser L."/>
            <person name="Kyrpides N."/>
            <person name="Kim E."/>
            <person name="Zhao J.-S.Z."/>
            <person name="Manno D."/>
            <person name="Hawari J."/>
            <person name="Richardson P."/>
        </authorList>
    </citation>
    <scope>NUCLEOTIDE SEQUENCE [LARGE SCALE GENOMIC DNA]</scope>
    <source>
        <strain>ATCC 700345 / ANG-SQ1</strain>
    </source>
</reference>
<proteinExistence type="inferred from homology"/>
<organism>
    <name type="scientific">Shewanella pealeana (strain ATCC 700345 / ANG-SQ1)</name>
    <dbReference type="NCBI Taxonomy" id="398579"/>
    <lineage>
        <taxon>Bacteria</taxon>
        <taxon>Pseudomonadati</taxon>
        <taxon>Pseudomonadota</taxon>
        <taxon>Gammaproteobacteria</taxon>
        <taxon>Alteromonadales</taxon>
        <taxon>Shewanellaceae</taxon>
        <taxon>Shewanella</taxon>
    </lineage>
</organism>
<evidence type="ECO:0000255" key="1">
    <source>
        <dbReference type="HAMAP-Rule" id="MF_00159"/>
    </source>
</evidence>
<feature type="chain" id="PRO_1000076901" description="4-hydroxy-3-methylbut-2-en-1-yl diphosphate synthase (flavodoxin)">
    <location>
        <begin position="1"/>
        <end position="371"/>
    </location>
</feature>
<feature type="binding site" evidence="1">
    <location>
        <position position="270"/>
    </location>
    <ligand>
        <name>[4Fe-4S] cluster</name>
        <dbReference type="ChEBI" id="CHEBI:49883"/>
    </ligand>
</feature>
<feature type="binding site" evidence="1">
    <location>
        <position position="273"/>
    </location>
    <ligand>
        <name>[4Fe-4S] cluster</name>
        <dbReference type="ChEBI" id="CHEBI:49883"/>
    </ligand>
</feature>
<feature type="binding site" evidence="1">
    <location>
        <position position="305"/>
    </location>
    <ligand>
        <name>[4Fe-4S] cluster</name>
        <dbReference type="ChEBI" id="CHEBI:49883"/>
    </ligand>
</feature>
<feature type="binding site" evidence="1">
    <location>
        <position position="312"/>
    </location>
    <ligand>
        <name>[4Fe-4S] cluster</name>
        <dbReference type="ChEBI" id="CHEBI:49883"/>
    </ligand>
</feature>
<accession>A8H245</accession>